<feature type="chain" id="PRO_0000074490" description="Na(+)-translocating NADH-quinone reductase subunit F">
    <location>
        <begin position="1"/>
        <end position="431"/>
    </location>
</feature>
<feature type="transmembrane region" description="Helical" evidence="1">
    <location>
        <begin position="10"/>
        <end position="30"/>
    </location>
</feature>
<feature type="domain" description="2Fe-2S ferredoxin-type" evidence="1">
    <location>
        <begin position="41"/>
        <end position="133"/>
    </location>
</feature>
<feature type="domain" description="FAD-binding FR-type" evidence="1">
    <location>
        <begin position="136"/>
        <end position="286"/>
    </location>
</feature>
<feature type="region of interest" description="Catalytic">
    <location>
        <begin position="289"/>
        <end position="413"/>
    </location>
</feature>
<feature type="binding site" evidence="1">
    <location>
        <position position="76"/>
    </location>
    <ligand>
        <name>[2Fe-2S] cluster</name>
        <dbReference type="ChEBI" id="CHEBI:190135"/>
    </ligand>
</feature>
<feature type="binding site" evidence="1">
    <location>
        <position position="82"/>
    </location>
    <ligand>
        <name>[2Fe-2S] cluster</name>
        <dbReference type="ChEBI" id="CHEBI:190135"/>
    </ligand>
</feature>
<feature type="binding site" evidence="1">
    <location>
        <position position="85"/>
    </location>
    <ligand>
        <name>[2Fe-2S] cluster</name>
        <dbReference type="ChEBI" id="CHEBI:190135"/>
    </ligand>
</feature>
<feature type="binding site" evidence="1">
    <location>
        <position position="117"/>
    </location>
    <ligand>
        <name>[2Fe-2S] cluster</name>
        <dbReference type="ChEBI" id="CHEBI:190135"/>
    </ligand>
</feature>
<accession>Q9PLI3</accession>
<name>NQRF_CHLMU</name>
<protein>
    <recommendedName>
        <fullName evidence="1">Na(+)-translocating NADH-quinone reductase subunit F</fullName>
        <shortName evidence="1">Na(+)-NQR subunit F</shortName>
        <shortName evidence="1">Na(+)-translocating NQR subunit F</shortName>
        <ecNumber evidence="1">7.2.1.1</ecNumber>
    </recommendedName>
    <alternativeName>
        <fullName evidence="1">NQR complex subunit F</fullName>
    </alternativeName>
    <alternativeName>
        <fullName evidence="1">NQR-1 subunit F</fullName>
    </alternativeName>
</protein>
<keyword id="KW-0001">2Fe-2S</keyword>
<keyword id="KW-0997">Cell inner membrane</keyword>
<keyword id="KW-1003">Cell membrane</keyword>
<keyword id="KW-0274">FAD</keyword>
<keyword id="KW-0285">Flavoprotein</keyword>
<keyword id="KW-0406">Ion transport</keyword>
<keyword id="KW-0408">Iron</keyword>
<keyword id="KW-0411">Iron-sulfur</keyword>
<keyword id="KW-0472">Membrane</keyword>
<keyword id="KW-0479">Metal-binding</keyword>
<keyword id="KW-0520">NAD</keyword>
<keyword id="KW-0915">Sodium</keyword>
<keyword id="KW-0739">Sodium transport</keyword>
<keyword id="KW-1278">Translocase</keyword>
<keyword id="KW-0812">Transmembrane</keyword>
<keyword id="KW-1133">Transmembrane helix</keyword>
<keyword id="KW-0813">Transport</keyword>
<keyword id="KW-0830">Ubiquinone</keyword>
<evidence type="ECO:0000255" key="1">
    <source>
        <dbReference type="HAMAP-Rule" id="MF_00430"/>
    </source>
</evidence>
<sequence length="431" mass="48639">MSWLSSLYPIFIASTAFCALGLLLVAIILLSRKFLIKVHPCKLRINNDDSLTKTVDSGKTLLSSLLDSGIAIPSPCGGKAACKQCKIRITKNVDEPLETDRSTFSKQQLEQGWRLSCQTKVQHDMNLEIEERYFNASSWEGTVVSNENVATFIKELVLSVDPARPIPFKPGGYLQITVPSYKTNTSDWKQTMDPQYYSDWETFHLFDKVIDHQSLDANSANKAYSLASYPAELPLIKFNIRIATPPFINKSPDPTIPWGVCSSYIFSLKPGDKVTVSGPYGESFMKEDNRPVIFLIGGAGSSFGRSHILDLLLSKHTNRELTLWYGARSLKENIYQEEYEKLEKEFPNFHYHLVLSQPLQEDLDKGWDSKDPIKTNFLFKAFELGQLSKLPNPEDYLYYVCGPALHNSSILTLLDNYGVERSSIILDDFGS</sequence>
<proteinExistence type="inferred from homology"/>
<reference key="1">
    <citation type="journal article" date="2000" name="Nucleic Acids Res.">
        <title>Genome sequences of Chlamydia trachomatis MoPn and Chlamydia pneumoniae AR39.</title>
        <authorList>
            <person name="Read T.D."/>
            <person name="Brunham R.C."/>
            <person name="Shen C."/>
            <person name="Gill S.R."/>
            <person name="Heidelberg J.F."/>
            <person name="White O."/>
            <person name="Hickey E.K."/>
            <person name="Peterson J.D."/>
            <person name="Utterback T.R."/>
            <person name="Berry K.J."/>
            <person name="Bass S."/>
            <person name="Linher K.D."/>
            <person name="Weidman J.F."/>
            <person name="Khouri H.M."/>
            <person name="Craven B."/>
            <person name="Bowman C."/>
            <person name="Dodson R.J."/>
            <person name="Gwinn M.L."/>
            <person name="Nelson W.C."/>
            <person name="DeBoy R.T."/>
            <person name="Kolonay J.F."/>
            <person name="McClarty G."/>
            <person name="Salzberg S.L."/>
            <person name="Eisen J.A."/>
            <person name="Fraser C.M."/>
        </authorList>
    </citation>
    <scope>NUCLEOTIDE SEQUENCE [LARGE SCALE GENOMIC DNA]</scope>
    <source>
        <strain>MoPn / Nigg</strain>
    </source>
</reference>
<comment type="function">
    <text evidence="1">NQR complex catalyzes the reduction of ubiquinone-1 to ubiquinol by two successive reactions, coupled with the transport of Na(+) ions from the cytoplasm to the periplasm. The first step is catalyzed by NqrF, which accepts electrons from NADH and reduces ubiquinone-1 to ubisemiquinone by a one-electron transfer pathway.</text>
</comment>
<comment type="catalytic activity">
    <reaction evidence="1">
        <text>a ubiquinone + n Na(+)(in) + NADH + H(+) = a ubiquinol + n Na(+)(out) + NAD(+)</text>
        <dbReference type="Rhea" id="RHEA:47748"/>
        <dbReference type="Rhea" id="RHEA-COMP:9565"/>
        <dbReference type="Rhea" id="RHEA-COMP:9566"/>
        <dbReference type="ChEBI" id="CHEBI:15378"/>
        <dbReference type="ChEBI" id="CHEBI:16389"/>
        <dbReference type="ChEBI" id="CHEBI:17976"/>
        <dbReference type="ChEBI" id="CHEBI:29101"/>
        <dbReference type="ChEBI" id="CHEBI:57540"/>
        <dbReference type="ChEBI" id="CHEBI:57945"/>
        <dbReference type="EC" id="7.2.1.1"/>
    </reaction>
</comment>
<comment type="cofactor">
    <cofactor evidence="1">
        <name>[2Fe-2S] cluster</name>
        <dbReference type="ChEBI" id="CHEBI:190135"/>
    </cofactor>
    <text evidence="1">Binds 1 [2Fe-2S] cluster.</text>
</comment>
<comment type="cofactor">
    <cofactor evidence="1">
        <name>FAD</name>
        <dbReference type="ChEBI" id="CHEBI:57692"/>
    </cofactor>
</comment>
<comment type="subunit">
    <text evidence="1">Composed of six subunits; NqrA, NqrB, NqrC, NqrD, NqrE and NqrF.</text>
</comment>
<comment type="subcellular location">
    <subcellularLocation>
        <location evidence="1">Cell inner membrane</location>
        <topology evidence="1">Single-pass membrane protein</topology>
    </subcellularLocation>
</comment>
<comment type="similarity">
    <text evidence="1">Belongs to the NqrF family.</text>
</comment>
<gene>
    <name evidence="1" type="primary">nqrF</name>
    <name type="ordered locus">TC_0116</name>
</gene>
<organism>
    <name type="scientific">Chlamydia muridarum (strain MoPn / Nigg)</name>
    <dbReference type="NCBI Taxonomy" id="243161"/>
    <lineage>
        <taxon>Bacteria</taxon>
        <taxon>Pseudomonadati</taxon>
        <taxon>Chlamydiota</taxon>
        <taxon>Chlamydiia</taxon>
        <taxon>Chlamydiales</taxon>
        <taxon>Chlamydiaceae</taxon>
        <taxon>Chlamydia/Chlamydophila group</taxon>
        <taxon>Chlamydia</taxon>
    </lineage>
</organism>
<dbReference type="EC" id="7.2.1.1" evidence="1"/>
<dbReference type="EMBL" id="AE002160">
    <property type="protein sequence ID" value="AAF38995.1"/>
    <property type="molecule type" value="Genomic_DNA"/>
</dbReference>
<dbReference type="PIR" id="H81738">
    <property type="entry name" value="H81738"/>
</dbReference>
<dbReference type="RefSeq" id="WP_010229428.1">
    <property type="nucleotide sequence ID" value="NZ_CP063055.1"/>
</dbReference>
<dbReference type="SMR" id="Q9PLI3"/>
<dbReference type="GeneID" id="1245650"/>
<dbReference type="KEGG" id="cmu:TC_0116"/>
<dbReference type="eggNOG" id="COG2871">
    <property type="taxonomic scope" value="Bacteria"/>
</dbReference>
<dbReference type="HOGENOM" id="CLU_003827_7_2_0"/>
<dbReference type="OrthoDB" id="9796486at2"/>
<dbReference type="Proteomes" id="UP000000800">
    <property type="component" value="Chromosome"/>
</dbReference>
<dbReference type="GO" id="GO:0005886">
    <property type="term" value="C:plasma membrane"/>
    <property type="evidence" value="ECO:0007669"/>
    <property type="project" value="UniProtKB-SubCell"/>
</dbReference>
<dbReference type="GO" id="GO:0051537">
    <property type="term" value="F:2 iron, 2 sulfur cluster binding"/>
    <property type="evidence" value="ECO:0007669"/>
    <property type="project" value="UniProtKB-KW"/>
</dbReference>
<dbReference type="GO" id="GO:0009055">
    <property type="term" value="F:electron transfer activity"/>
    <property type="evidence" value="ECO:0007669"/>
    <property type="project" value="UniProtKB-UniRule"/>
</dbReference>
<dbReference type="GO" id="GO:0046872">
    <property type="term" value="F:metal ion binding"/>
    <property type="evidence" value="ECO:0007669"/>
    <property type="project" value="UniProtKB-KW"/>
</dbReference>
<dbReference type="GO" id="GO:0016655">
    <property type="term" value="F:oxidoreductase activity, acting on NAD(P)H, quinone or similar compound as acceptor"/>
    <property type="evidence" value="ECO:0007669"/>
    <property type="project" value="InterPro"/>
</dbReference>
<dbReference type="GO" id="GO:0006814">
    <property type="term" value="P:sodium ion transport"/>
    <property type="evidence" value="ECO:0007669"/>
    <property type="project" value="UniProtKB-UniRule"/>
</dbReference>
<dbReference type="CDD" id="cd00207">
    <property type="entry name" value="fer2"/>
    <property type="match status" value="1"/>
</dbReference>
<dbReference type="CDD" id="cd06188">
    <property type="entry name" value="NADH_quinone_reductase"/>
    <property type="match status" value="1"/>
</dbReference>
<dbReference type="Gene3D" id="3.10.20.30">
    <property type="match status" value="1"/>
</dbReference>
<dbReference type="Gene3D" id="3.40.50.80">
    <property type="entry name" value="Nucleotide-binding domain of ferredoxin-NADP reductase (FNR) module"/>
    <property type="match status" value="1"/>
</dbReference>
<dbReference type="Gene3D" id="2.40.30.10">
    <property type="entry name" value="Translation factors"/>
    <property type="match status" value="1"/>
</dbReference>
<dbReference type="HAMAP" id="MF_00430">
    <property type="entry name" value="NqrF"/>
    <property type="match status" value="1"/>
</dbReference>
<dbReference type="InterPro" id="IPR036010">
    <property type="entry name" value="2Fe-2S_ferredoxin-like_sf"/>
</dbReference>
<dbReference type="InterPro" id="IPR001041">
    <property type="entry name" value="2Fe-2S_ferredoxin-type"/>
</dbReference>
<dbReference type="InterPro" id="IPR012675">
    <property type="entry name" value="Beta-grasp_dom_sf"/>
</dbReference>
<dbReference type="InterPro" id="IPR017927">
    <property type="entry name" value="FAD-bd_FR_type"/>
</dbReference>
<dbReference type="InterPro" id="IPR039261">
    <property type="entry name" value="FNR_nucleotide-bd"/>
</dbReference>
<dbReference type="InterPro" id="IPR010205">
    <property type="entry name" value="NqrF"/>
</dbReference>
<dbReference type="InterPro" id="IPR001433">
    <property type="entry name" value="OxRdtase_FAD/NAD-bd"/>
</dbReference>
<dbReference type="InterPro" id="IPR017938">
    <property type="entry name" value="Riboflavin_synthase-like_b-brl"/>
</dbReference>
<dbReference type="NCBIfam" id="TIGR01941">
    <property type="entry name" value="nqrF"/>
    <property type="match status" value="1"/>
</dbReference>
<dbReference type="PANTHER" id="PTHR43644">
    <property type="entry name" value="NA(+)-TRANSLOCATING NADH-QUINONE REDUCTASE SUBUNIT"/>
    <property type="match status" value="1"/>
</dbReference>
<dbReference type="PANTHER" id="PTHR43644:SF1">
    <property type="entry name" value="NAD(P)H-FLAVIN REDUCTASE"/>
    <property type="match status" value="1"/>
</dbReference>
<dbReference type="Pfam" id="PF00111">
    <property type="entry name" value="Fer2"/>
    <property type="match status" value="1"/>
</dbReference>
<dbReference type="Pfam" id="PF00175">
    <property type="entry name" value="NAD_binding_1"/>
    <property type="match status" value="1"/>
</dbReference>
<dbReference type="PIRSF" id="PIRSF000044">
    <property type="entry name" value="Cis_Diol_DH_RD"/>
    <property type="match status" value="1"/>
</dbReference>
<dbReference type="SUPFAM" id="SSF54292">
    <property type="entry name" value="2Fe-2S ferredoxin-like"/>
    <property type="match status" value="1"/>
</dbReference>
<dbReference type="SUPFAM" id="SSF52343">
    <property type="entry name" value="Ferredoxin reductase-like, C-terminal NADP-linked domain"/>
    <property type="match status" value="1"/>
</dbReference>
<dbReference type="SUPFAM" id="SSF63380">
    <property type="entry name" value="Riboflavin synthase domain-like"/>
    <property type="match status" value="1"/>
</dbReference>
<dbReference type="PROSITE" id="PS51085">
    <property type="entry name" value="2FE2S_FER_2"/>
    <property type="match status" value="1"/>
</dbReference>
<dbReference type="PROSITE" id="PS51384">
    <property type="entry name" value="FAD_FR"/>
    <property type="match status" value="1"/>
</dbReference>